<keyword id="KW-0150">Chloroplast</keyword>
<keyword id="KW-0934">Plastid</keyword>
<keyword id="KW-0687">Ribonucleoprotein</keyword>
<keyword id="KW-0689">Ribosomal protein</keyword>
<proteinExistence type="inferred from homology"/>
<dbReference type="EMBL" id="Z67753">
    <property type="protein sequence ID" value="CAA91748.1"/>
    <property type="molecule type" value="Genomic_DNA"/>
</dbReference>
<dbReference type="PIR" id="S78375">
    <property type="entry name" value="S78375"/>
</dbReference>
<dbReference type="RefSeq" id="NP_043716.1">
    <property type="nucleotide sequence ID" value="NC_001713.1"/>
</dbReference>
<dbReference type="SMR" id="P49490"/>
<dbReference type="GeneID" id="801741"/>
<dbReference type="GO" id="GO:0009507">
    <property type="term" value="C:chloroplast"/>
    <property type="evidence" value="ECO:0007669"/>
    <property type="project" value="UniProtKB-SubCell"/>
</dbReference>
<dbReference type="GO" id="GO:0005763">
    <property type="term" value="C:mitochondrial small ribosomal subunit"/>
    <property type="evidence" value="ECO:0007669"/>
    <property type="project" value="TreeGrafter"/>
</dbReference>
<dbReference type="GO" id="GO:0003735">
    <property type="term" value="F:structural constituent of ribosome"/>
    <property type="evidence" value="ECO:0007669"/>
    <property type="project" value="InterPro"/>
</dbReference>
<dbReference type="GO" id="GO:0006412">
    <property type="term" value="P:translation"/>
    <property type="evidence" value="ECO:0007669"/>
    <property type="project" value="UniProtKB-UniRule"/>
</dbReference>
<dbReference type="CDD" id="cd01425">
    <property type="entry name" value="RPS2"/>
    <property type="match status" value="1"/>
</dbReference>
<dbReference type="FunFam" id="1.10.287.610:FF:000001">
    <property type="entry name" value="30S ribosomal protein S2"/>
    <property type="match status" value="1"/>
</dbReference>
<dbReference type="Gene3D" id="3.40.50.10490">
    <property type="entry name" value="Glucose-6-phosphate isomerase like protein, domain 1"/>
    <property type="match status" value="1"/>
</dbReference>
<dbReference type="Gene3D" id="1.10.287.610">
    <property type="entry name" value="Helix hairpin bin"/>
    <property type="match status" value="1"/>
</dbReference>
<dbReference type="HAMAP" id="MF_00291_B">
    <property type="entry name" value="Ribosomal_uS2_B"/>
    <property type="match status" value="1"/>
</dbReference>
<dbReference type="InterPro" id="IPR001865">
    <property type="entry name" value="Ribosomal_uS2"/>
</dbReference>
<dbReference type="InterPro" id="IPR005706">
    <property type="entry name" value="Ribosomal_uS2_bac/mit/plastid"/>
</dbReference>
<dbReference type="InterPro" id="IPR018130">
    <property type="entry name" value="Ribosomal_uS2_CS"/>
</dbReference>
<dbReference type="InterPro" id="IPR023591">
    <property type="entry name" value="Ribosomal_uS2_flav_dom_sf"/>
</dbReference>
<dbReference type="NCBIfam" id="TIGR01011">
    <property type="entry name" value="rpsB_bact"/>
    <property type="match status" value="1"/>
</dbReference>
<dbReference type="PANTHER" id="PTHR12534">
    <property type="entry name" value="30S RIBOSOMAL PROTEIN S2 PROKARYOTIC AND ORGANELLAR"/>
    <property type="match status" value="1"/>
</dbReference>
<dbReference type="PANTHER" id="PTHR12534:SF0">
    <property type="entry name" value="SMALL RIBOSOMAL SUBUNIT PROTEIN US2M"/>
    <property type="match status" value="1"/>
</dbReference>
<dbReference type="Pfam" id="PF00318">
    <property type="entry name" value="Ribosomal_S2"/>
    <property type="match status" value="1"/>
</dbReference>
<dbReference type="PRINTS" id="PR00395">
    <property type="entry name" value="RIBOSOMALS2"/>
</dbReference>
<dbReference type="SUPFAM" id="SSF52313">
    <property type="entry name" value="Ribosomal protein S2"/>
    <property type="match status" value="1"/>
</dbReference>
<dbReference type="PROSITE" id="PS00962">
    <property type="entry name" value="RIBOSOMAL_S2_1"/>
    <property type="match status" value="1"/>
</dbReference>
<protein>
    <recommendedName>
        <fullName evidence="1">Small ribosomal subunit protein uS2c</fullName>
    </recommendedName>
    <alternativeName>
        <fullName>30S ribosomal protein S2, chloroplastic</fullName>
    </alternativeName>
</protein>
<gene>
    <name type="primary">rps2</name>
</gene>
<accession>P49490</accession>
<name>RR2_TRICV</name>
<evidence type="ECO:0000305" key="1"/>
<comment type="subcellular location">
    <subcellularLocation>
        <location>Plastid</location>
        <location>Chloroplast</location>
    </subcellularLocation>
</comment>
<comment type="similarity">
    <text evidence="1">Belongs to the universal ribosomal protein uS2 family.</text>
</comment>
<reference key="1">
    <citation type="journal article" date="1995" name="Plant Mol. Biol. Rep.">
        <title>The chloroplast genome of a chlorophyll a+c-containing alga, Odontella sinensis.</title>
        <authorList>
            <person name="Kowallik K.V."/>
            <person name="Stoebe B."/>
            <person name="Schaffran I."/>
            <person name="Kroth-Pancic P."/>
            <person name="Freier U."/>
        </authorList>
    </citation>
    <scope>NUCLEOTIDE SEQUENCE [LARGE SCALE GENOMIC DNA]</scope>
</reference>
<feature type="chain" id="PRO_0000134305" description="Small ribosomal subunit protein uS2c">
    <location>
        <begin position="1"/>
        <end position="229"/>
    </location>
</feature>
<organism>
    <name type="scientific">Trieres chinensis</name>
    <name type="common">Marine centric diatom</name>
    <name type="synonym">Odontella sinensis</name>
    <dbReference type="NCBI Taxonomy" id="1514140"/>
    <lineage>
        <taxon>Eukaryota</taxon>
        <taxon>Sar</taxon>
        <taxon>Stramenopiles</taxon>
        <taxon>Ochrophyta</taxon>
        <taxon>Bacillariophyta</taxon>
        <taxon>Mediophyceae</taxon>
        <taxon>Biddulphiophycidae</taxon>
        <taxon>Eupodiscales</taxon>
        <taxon>Parodontellaceae</taxon>
        <taxon>Trieres</taxon>
    </lineage>
</organism>
<sequence length="229" mass="25859">MADITLAQLLEAGVHFGHKAYRWNPKMFPYIYTERNNIHILDLVQSAQLLKEANSYLQSAAEKGQTFLFIGTKPQASALIAQEAKRCNSYYVNHRWLGGMLTNWVTLKSRIARLKTLEQEEADQVFNLLPKKEASLRRKELEKLRKNLNGIKDMEKLPDVAIVIDQKREMTAVIECRKLGIPIISILDTNCDPDLVDIPIPGNDDAVGSIKLVLQSLTDSINTGKLTTK</sequence>
<geneLocation type="chloroplast"/>